<organism>
    <name type="scientific">Stylonychia lemnae</name>
    <name type="common">Ciliate</name>
    <dbReference type="NCBI Taxonomy" id="5949"/>
    <lineage>
        <taxon>Eukaryota</taxon>
        <taxon>Sar</taxon>
        <taxon>Alveolata</taxon>
        <taxon>Ciliophora</taxon>
        <taxon>Intramacronucleata</taxon>
        <taxon>Spirotrichea</taxon>
        <taxon>Stichotrichia</taxon>
        <taxon>Sporadotrichida</taxon>
        <taxon>Oxytrichidae</taxon>
        <taxon>Stylonychinae</taxon>
        <taxon>Stylonychia</taxon>
    </lineage>
</organism>
<name>TBA1_STYLE</name>
<proteinExistence type="inferred from homology"/>
<accession>P07304</accession>
<feature type="chain" id="PRO_0000048228" description="Tubulin alpha-1 chain">
    <location>
        <begin position="1"/>
        <end position="445"/>
    </location>
</feature>
<feature type="active site" evidence="2">
    <location>
        <position position="254"/>
    </location>
</feature>
<feature type="binding site" evidence="2">
    <location>
        <position position="11"/>
    </location>
    <ligand>
        <name>GTP</name>
        <dbReference type="ChEBI" id="CHEBI:37565"/>
    </ligand>
</feature>
<feature type="binding site" evidence="2">
    <location>
        <position position="71"/>
    </location>
    <ligand>
        <name>GTP</name>
        <dbReference type="ChEBI" id="CHEBI:37565"/>
    </ligand>
</feature>
<feature type="binding site" evidence="2">
    <location>
        <position position="71"/>
    </location>
    <ligand>
        <name>Mg(2+)</name>
        <dbReference type="ChEBI" id="CHEBI:18420"/>
    </ligand>
</feature>
<feature type="binding site" evidence="2">
    <location>
        <position position="140"/>
    </location>
    <ligand>
        <name>GTP</name>
        <dbReference type="ChEBI" id="CHEBI:37565"/>
    </ligand>
</feature>
<feature type="binding site" evidence="2">
    <location>
        <position position="144"/>
    </location>
    <ligand>
        <name>GTP</name>
        <dbReference type="ChEBI" id="CHEBI:37565"/>
    </ligand>
</feature>
<feature type="binding site" evidence="2">
    <location>
        <position position="145"/>
    </location>
    <ligand>
        <name>GTP</name>
        <dbReference type="ChEBI" id="CHEBI:37565"/>
    </ligand>
</feature>
<feature type="binding site" evidence="2">
    <location>
        <position position="179"/>
    </location>
    <ligand>
        <name>GTP</name>
        <dbReference type="ChEBI" id="CHEBI:37565"/>
    </ligand>
</feature>
<feature type="binding site" evidence="2">
    <location>
        <position position="206"/>
    </location>
    <ligand>
        <name>GTP</name>
        <dbReference type="ChEBI" id="CHEBI:37565"/>
    </ligand>
</feature>
<feature type="binding site" evidence="2">
    <location>
        <position position="228"/>
    </location>
    <ligand>
        <name>GTP</name>
        <dbReference type="ChEBI" id="CHEBI:37565"/>
    </ligand>
</feature>
<feature type="modified residue" description="N6-acetyllysine" evidence="1">
    <location>
        <position position="40"/>
    </location>
</feature>
<evidence type="ECO:0000250" key="1"/>
<evidence type="ECO:0000250" key="2">
    <source>
        <dbReference type="UniProtKB" id="P68363"/>
    </source>
</evidence>
<evidence type="ECO:0000305" key="3"/>
<comment type="function">
    <text>Tubulin is the major constituent of microtubules, a cylinder consisting of laterally associated linear protofilaments composed of alpha- and beta-tubulin heterodimers. Microtubules grow by the addition of GTP-tubulin dimers to the microtubule end, where a stabilizing cap forms. Below the cap, tubulin dimers are in GDP-bound state, owing to GTPase activity of alpha-tubulin.</text>
</comment>
<comment type="catalytic activity">
    <reaction evidence="2">
        <text>GTP + H2O = GDP + phosphate + H(+)</text>
        <dbReference type="Rhea" id="RHEA:19669"/>
        <dbReference type="ChEBI" id="CHEBI:15377"/>
        <dbReference type="ChEBI" id="CHEBI:15378"/>
        <dbReference type="ChEBI" id="CHEBI:37565"/>
        <dbReference type="ChEBI" id="CHEBI:43474"/>
        <dbReference type="ChEBI" id="CHEBI:58189"/>
    </reaction>
    <physiologicalReaction direction="left-to-right" evidence="2">
        <dbReference type="Rhea" id="RHEA:19670"/>
    </physiologicalReaction>
</comment>
<comment type="cofactor">
    <cofactor evidence="2">
        <name>Mg(2+)</name>
        <dbReference type="ChEBI" id="CHEBI:18420"/>
    </cofactor>
</comment>
<comment type="subunit">
    <text>Dimer of alpha and beta chains. A typical microtubule is a hollow water-filled tube with an outer diameter of 25 nm and an inner diameter of 15 nM. Alpha-beta heterodimers associate head-to-tail to form protofilaments running lengthwise along the microtubule wall with the beta-tubulin subunit facing the microtubule plus end conferring a structural polarity. Microtubules usually have 13 protofilaments but different protofilament numbers can be found in some organisms and specialized cells.</text>
</comment>
<comment type="subcellular location">
    <subcellularLocation>
        <location>Cytoplasm</location>
        <location>Cytoskeleton</location>
    </subcellularLocation>
</comment>
<comment type="PTM">
    <text evidence="1">Acetylation of alpha chains at Lys-40 stabilizes microtubules and affects affinity and processivity of microtubule motors. This modification has a role in multiple cellular functions, ranging from cell motility, cell cycle progression or cell differentiation to intracellular trafficking and signaling (By similarity).</text>
</comment>
<comment type="similarity">
    <text evidence="3">Belongs to the tubulin family.</text>
</comment>
<dbReference type="EC" id="3.6.5.-" evidence="2"/>
<dbReference type="EMBL" id="X01746">
    <property type="protein sequence ID" value="CAA25882.1"/>
    <property type="molecule type" value="Genomic_DNA"/>
</dbReference>
<dbReference type="PIR" id="A23053">
    <property type="entry name" value="A23053"/>
</dbReference>
<dbReference type="SMR" id="P07304"/>
<dbReference type="GO" id="GO:0005737">
    <property type="term" value="C:cytoplasm"/>
    <property type="evidence" value="ECO:0007669"/>
    <property type="project" value="UniProtKB-KW"/>
</dbReference>
<dbReference type="GO" id="GO:0005874">
    <property type="term" value="C:microtubule"/>
    <property type="evidence" value="ECO:0007669"/>
    <property type="project" value="UniProtKB-KW"/>
</dbReference>
<dbReference type="GO" id="GO:0005525">
    <property type="term" value="F:GTP binding"/>
    <property type="evidence" value="ECO:0007669"/>
    <property type="project" value="UniProtKB-KW"/>
</dbReference>
<dbReference type="GO" id="GO:0016787">
    <property type="term" value="F:hydrolase activity"/>
    <property type="evidence" value="ECO:0007669"/>
    <property type="project" value="UniProtKB-KW"/>
</dbReference>
<dbReference type="GO" id="GO:0046872">
    <property type="term" value="F:metal ion binding"/>
    <property type="evidence" value="ECO:0007669"/>
    <property type="project" value="UniProtKB-KW"/>
</dbReference>
<dbReference type="GO" id="GO:0005200">
    <property type="term" value="F:structural constituent of cytoskeleton"/>
    <property type="evidence" value="ECO:0007669"/>
    <property type="project" value="InterPro"/>
</dbReference>
<dbReference type="GO" id="GO:0007017">
    <property type="term" value="P:microtubule-based process"/>
    <property type="evidence" value="ECO:0007669"/>
    <property type="project" value="InterPro"/>
</dbReference>
<dbReference type="CDD" id="cd02186">
    <property type="entry name" value="alpha_tubulin"/>
    <property type="match status" value="1"/>
</dbReference>
<dbReference type="FunFam" id="1.10.287.600:FF:000005">
    <property type="entry name" value="Tubulin alpha chain"/>
    <property type="match status" value="1"/>
</dbReference>
<dbReference type="FunFam" id="3.30.1330.20:FF:000001">
    <property type="entry name" value="Tubulin alpha chain"/>
    <property type="match status" value="1"/>
</dbReference>
<dbReference type="FunFam" id="3.40.50.1440:FF:000004">
    <property type="entry name" value="Tubulin alpha chain"/>
    <property type="match status" value="1"/>
</dbReference>
<dbReference type="Gene3D" id="1.10.287.600">
    <property type="entry name" value="Helix hairpin bin"/>
    <property type="match status" value="1"/>
</dbReference>
<dbReference type="Gene3D" id="3.30.1330.20">
    <property type="entry name" value="Tubulin/FtsZ, C-terminal domain"/>
    <property type="match status" value="1"/>
</dbReference>
<dbReference type="Gene3D" id="3.40.50.1440">
    <property type="entry name" value="Tubulin/FtsZ, GTPase domain"/>
    <property type="match status" value="1"/>
</dbReference>
<dbReference type="InterPro" id="IPR002452">
    <property type="entry name" value="Alpha_tubulin"/>
</dbReference>
<dbReference type="InterPro" id="IPR008280">
    <property type="entry name" value="Tub_FtsZ_C"/>
</dbReference>
<dbReference type="InterPro" id="IPR000217">
    <property type="entry name" value="Tubulin"/>
</dbReference>
<dbReference type="InterPro" id="IPR037103">
    <property type="entry name" value="Tubulin/FtsZ-like_C"/>
</dbReference>
<dbReference type="InterPro" id="IPR018316">
    <property type="entry name" value="Tubulin/FtsZ_2-layer-sand-dom"/>
</dbReference>
<dbReference type="InterPro" id="IPR036525">
    <property type="entry name" value="Tubulin/FtsZ_GTPase_sf"/>
</dbReference>
<dbReference type="InterPro" id="IPR023123">
    <property type="entry name" value="Tubulin_C"/>
</dbReference>
<dbReference type="InterPro" id="IPR017975">
    <property type="entry name" value="Tubulin_CS"/>
</dbReference>
<dbReference type="InterPro" id="IPR003008">
    <property type="entry name" value="Tubulin_FtsZ_GTPase"/>
</dbReference>
<dbReference type="PANTHER" id="PTHR11588">
    <property type="entry name" value="TUBULIN"/>
    <property type="match status" value="1"/>
</dbReference>
<dbReference type="Pfam" id="PF00091">
    <property type="entry name" value="Tubulin"/>
    <property type="match status" value="1"/>
</dbReference>
<dbReference type="Pfam" id="PF03953">
    <property type="entry name" value="Tubulin_C"/>
    <property type="match status" value="1"/>
</dbReference>
<dbReference type="PRINTS" id="PR01162">
    <property type="entry name" value="ALPHATUBULIN"/>
</dbReference>
<dbReference type="PRINTS" id="PR01161">
    <property type="entry name" value="TUBULIN"/>
</dbReference>
<dbReference type="SMART" id="SM00864">
    <property type="entry name" value="Tubulin"/>
    <property type="match status" value="1"/>
</dbReference>
<dbReference type="SMART" id="SM00865">
    <property type="entry name" value="Tubulin_C"/>
    <property type="match status" value="1"/>
</dbReference>
<dbReference type="SUPFAM" id="SSF55307">
    <property type="entry name" value="Tubulin C-terminal domain-like"/>
    <property type="match status" value="1"/>
</dbReference>
<dbReference type="SUPFAM" id="SSF52490">
    <property type="entry name" value="Tubulin nucleotide-binding domain-like"/>
    <property type="match status" value="1"/>
</dbReference>
<dbReference type="PROSITE" id="PS00227">
    <property type="entry name" value="TUBULIN"/>
    <property type="match status" value="1"/>
</dbReference>
<keyword id="KW-0007">Acetylation</keyword>
<keyword id="KW-0963">Cytoplasm</keyword>
<keyword id="KW-0206">Cytoskeleton</keyword>
<keyword id="KW-0342">GTP-binding</keyword>
<keyword id="KW-0378">Hydrolase</keyword>
<keyword id="KW-0460">Magnesium</keyword>
<keyword id="KW-0479">Metal-binding</keyword>
<keyword id="KW-0493">Microtubule</keyword>
<keyword id="KW-0547">Nucleotide-binding</keyword>
<protein>
    <recommendedName>
        <fullName>Tubulin alpha-1 chain</fullName>
        <ecNumber evidence="2">3.6.5.-</ecNumber>
    </recommendedName>
</protein>
<reference key="1">
    <citation type="journal article" date="1985" name="Nucleic Acids Res.">
        <title>Nucleotide sequence of a macronuclear DNA molecule coding for alpha-tubulin from the ciliate Stylonychia lemnae. Special codon usage: TAA is not a translation termination codon.</title>
        <authorList>
            <person name="Helftenbein E."/>
        </authorList>
    </citation>
    <scope>NUCLEOTIDE SEQUENCE [GENOMIC DNA]</scope>
</reference>
<sequence>MREVISIHVGQAGIQIGNACWELFCLEHGIQPDGQMPSDKTIGGGDDAFNTFFSETGAEKHVPRCVFLDLEPTVIDEVRTGTYRQLFHPEQLISGKEDAANNFARGHYTIGKEIVDLCLDRIRKLADQCTGLQGFLVFNSVGGGTGSGLGSLLLERLSVDYGKKSKLGFTVYPSPQVSTAVVEPYNSVLSTHSLLEHTDVAVMLDNEAVYDICRRNLDIERPTYTNLNRLIAQVISSLTASLRFDGALNVDVTEFQTNLVPYPSVIIRPSTPAEKAYHEQLSVAEITNSAFEPASMMAKCDPRHGKYMACCLMYRGDVVPKDVNAAVATIKTKRTIQFVDWCPTGFKCGINYQPPTVVPSGDPAKVMRAVCMISNSTAIAEVFSRIDHKFDLMYAKRAFVHWYVGEGMEEGEFSEVREDLAALEKDYEEVGIEIVEGEGEEEGME</sequence>